<dbReference type="EMBL" id="CP000454">
    <property type="protein sequence ID" value="ABK03650.1"/>
    <property type="molecule type" value="Genomic_DNA"/>
</dbReference>
<dbReference type="RefSeq" id="WP_011692114.1">
    <property type="nucleotide sequence ID" value="NC_008541.1"/>
</dbReference>
<dbReference type="SMR" id="A0JX80"/>
<dbReference type="STRING" id="290399.Arth_2270"/>
<dbReference type="KEGG" id="art:Arth_2270"/>
<dbReference type="eggNOG" id="COG0231">
    <property type="taxonomic scope" value="Bacteria"/>
</dbReference>
<dbReference type="HOGENOM" id="CLU_074944_0_1_11"/>
<dbReference type="OrthoDB" id="9801844at2"/>
<dbReference type="UniPathway" id="UPA00345"/>
<dbReference type="Proteomes" id="UP000000754">
    <property type="component" value="Chromosome"/>
</dbReference>
<dbReference type="GO" id="GO:0005737">
    <property type="term" value="C:cytoplasm"/>
    <property type="evidence" value="ECO:0007669"/>
    <property type="project" value="UniProtKB-SubCell"/>
</dbReference>
<dbReference type="GO" id="GO:0003746">
    <property type="term" value="F:translation elongation factor activity"/>
    <property type="evidence" value="ECO:0007669"/>
    <property type="project" value="UniProtKB-UniRule"/>
</dbReference>
<dbReference type="GO" id="GO:0043043">
    <property type="term" value="P:peptide biosynthetic process"/>
    <property type="evidence" value="ECO:0007669"/>
    <property type="project" value="InterPro"/>
</dbReference>
<dbReference type="CDD" id="cd04470">
    <property type="entry name" value="S1_EF-P_repeat_1"/>
    <property type="match status" value="1"/>
</dbReference>
<dbReference type="CDD" id="cd05794">
    <property type="entry name" value="S1_EF-P_repeat_2"/>
    <property type="match status" value="1"/>
</dbReference>
<dbReference type="FunFam" id="2.30.30.30:FF:000003">
    <property type="entry name" value="Elongation factor P"/>
    <property type="match status" value="1"/>
</dbReference>
<dbReference type="FunFam" id="2.40.50.140:FF:000004">
    <property type="entry name" value="Elongation factor P"/>
    <property type="match status" value="1"/>
</dbReference>
<dbReference type="FunFam" id="2.40.50.140:FF:000009">
    <property type="entry name" value="Elongation factor P"/>
    <property type="match status" value="1"/>
</dbReference>
<dbReference type="Gene3D" id="2.30.30.30">
    <property type="match status" value="1"/>
</dbReference>
<dbReference type="Gene3D" id="2.40.50.140">
    <property type="entry name" value="Nucleic acid-binding proteins"/>
    <property type="match status" value="2"/>
</dbReference>
<dbReference type="HAMAP" id="MF_00141">
    <property type="entry name" value="EF_P"/>
    <property type="match status" value="1"/>
</dbReference>
<dbReference type="InterPro" id="IPR015365">
    <property type="entry name" value="Elong-fact-P_C"/>
</dbReference>
<dbReference type="InterPro" id="IPR012340">
    <property type="entry name" value="NA-bd_OB-fold"/>
</dbReference>
<dbReference type="InterPro" id="IPR014722">
    <property type="entry name" value="Rib_uL2_dom2"/>
</dbReference>
<dbReference type="InterPro" id="IPR020599">
    <property type="entry name" value="Transl_elong_fac_P/YeiP"/>
</dbReference>
<dbReference type="InterPro" id="IPR013185">
    <property type="entry name" value="Transl_elong_KOW-like"/>
</dbReference>
<dbReference type="InterPro" id="IPR001059">
    <property type="entry name" value="Transl_elong_P/YeiP_cen"/>
</dbReference>
<dbReference type="InterPro" id="IPR011768">
    <property type="entry name" value="Transl_elongation_fac_P"/>
</dbReference>
<dbReference type="InterPro" id="IPR008991">
    <property type="entry name" value="Translation_prot_SH3-like_sf"/>
</dbReference>
<dbReference type="NCBIfam" id="TIGR00038">
    <property type="entry name" value="efp"/>
    <property type="match status" value="1"/>
</dbReference>
<dbReference type="NCBIfam" id="NF001810">
    <property type="entry name" value="PRK00529.1"/>
    <property type="match status" value="1"/>
</dbReference>
<dbReference type="PANTHER" id="PTHR30053">
    <property type="entry name" value="ELONGATION FACTOR P"/>
    <property type="match status" value="1"/>
</dbReference>
<dbReference type="PANTHER" id="PTHR30053:SF12">
    <property type="entry name" value="ELONGATION FACTOR P (EF-P) FAMILY PROTEIN"/>
    <property type="match status" value="1"/>
</dbReference>
<dbReference type="Pfam" id="PF01132">
    <property type="entry name" value="EFP"/>
    <property type="match status" value="1"/>
</dbReference>
<dbReference type="Pfam" id="PF08207">
    <property type="entry name" value="EFP_N"/>
    <property type="match status" value="1"/>
</dbReference>
<dbReference type="Pfam" id="PF09285">
    <property type="entry name" value="Elong-fact-P_C"/>
    <property type="match status" value="1"/>
</dbReference>
<dbReference type="PIRSF" id="PIRSF005901">
    <property type="entry name" value="EF-P"/>
    <property type="match status" value="1"/>
</dbReference>
<dbReference type="SMART" id="SM01185">
    <property type="entry name" value="EFP"/>
    <property type="match status" value="1"/>
</dbReference>
<dbReference type="SMART" id="SM00841">
    <property type="entry name" value="Elong-fact-P_C"/>
    <property type="match status" value="1"/>
</dbReference>
<dbReference type="SUPFAM" id="SSF50249">
    <property type="entry name" value="Nucleic acid-binding proteins"/>
    <property type="match status" value="2"/>
</dbReference>
<dbReference type="SUPFAM" id="SSF50104">
    <property type="entry name" value="Translation proteins SH3-like domain"/>
    <property type="match status" value="1"/>
</dbReference>
<feature type="chain" id="PRO_1000010678" description="Elongation factor P">
    <location>
        <begin position="1"/>
        <end position="187"/>
    </location>
</feature>
<comment type="function">
    <text evidence="1">Involved in peptide bond synthesis. Stimulates efficient translation and peptide-bond synthesis on native or reconstituted 70S ribosomes in vitro. Probably functions indirectly by altering the affinity of the ribosome for aminoacyl-tRNA, thus increasing their reactivity as acceptors for peptidyl transferase.</text>
</comment>
<comment type="pathway">
    <text evidence="1">Protein biosynthesis; polypeptide chain elongation.</text>
</comment>
<comment type="subcellular location">
    <subcellularLocation>
        <location evidence="1">Cytoplasm</location>
    </subcellularLocation>
</comment>
<comment type="similarity">
    <text evidence="1">Belongs to the elongation factor P family.</text>
</comment>
<protein>
    <recommendedName>
        <fullName evidence="1">Elongation factor P</fullName>
        <shortName evidence="1">EF-P</shortName>
    </recommendedName>
</protein>
<reference key="1">
    <citation type="journal article" date="2013" name="Stand. Genomic Sci.">
        <title>Complete genome sequence of Arthrobacter sp. strain FB24.</title>
        <authorList>
            <person name="Nakatsu C.H."/>
            <person name="Barabote R."/>
            <person name="Thompson S."/>
            <person name="Bruce D."/>
            <person name="Detter C."/>
            <person name="Brettin T."/>
            <person name="Han C."/>
            <person name="Beasley F."/>
            <person name="Chen W."/>
            <person name="Konopka A."/>
            <person name="Xie G."/>
        </authorList>
    </citation>
    <scope>NUCLEOTIDE SEQUENCE [LARGE SCALE GENOMIC DNA]</scope>
    <source>
        <strain>FB24</strain>
    </source>
</reference>
<accession>A0JX80</accession>
<name>EFP_ARTS2</name>
<evidence type="ECO:0000255" key="1">
    <source>
        <dbReference type="HAMAP-Rule" id="MF_00141"/>
    </source>
</evidence>
<proteinExistence type="inferred from homology"/>
<sequence>MATTNDIKNGTVLKLEGQLWNIIEFQHVKPGKGGAFVRTKMRNVMSGKVVDKTFNAGLKIETATVDRRDYQYLYQDGADFVFMDTQDYDQITVSGATVGDATNFMLENQMVNIAIHEGTPLYIELPPSVVLEITYTEPGLQGDRSSAGTKPATLETGYEIQVPLFVENNTKVKVDTRDGSYLGRVND</sequence>
<keyword id="KW-0963">Cytoplasm</keyword>
<keyword id="KW-0251">Elongation factor</keyword>
<keyword id="KW-0648">Protein biosynthesis</keyword>
<keyword id="KW-1185">Reference proteome</keyword>
<organism>
    <name type="scientific">Arthrobacter sp. (strain FB24)</name>
    <dbReference type="NCBI Taxonomy" id="290399"/>
    <lineage>
        <taxon>Bacteria</taxon>
        <taxon>Bacillati</taxon>
        <taxon>Actinomycetota</taxon>
        <taxon>Actinomycetes</taxon>
        <taxon>Micrococcales</taxon>
        <taxon>Micrococcaceae</taxon>
        <taxon>Arthrobacter</taxon>
    </lineage>
</organism>
<gene>
    <name evidence="1" type="primary">efp</name>
    <name type="ordered locus">Arth_2270</name>
</gene>